<accession>O51638</accession>
<proteinExistence type="evidence at protein level"/>
<evidence type="ECO:0000255" key="1">
    <source>
        <dbReference type="HAMAP-Rule" id="MF_00385"/>
    </source>
</evidence>
<evidence type="ECO:0000305" key="2"/>
<keyword id="KW-0002">3D-structure</keyword>
<keyword id="KW-1185">Reference proteome</keyword>
<keyword id="KW-0687">Ribonucleoprotein</keyword>
<keyword id="KW-0689">Ribosomal protein</keyword>
<name>RS16_BORBU</name>
<comment type="similarity">
    <text evidence="1">Belongs to the bacterial ribosomal protein bS16 family.</text>
</comment>
<sequence length="86" mass="10037">MSVKIRLKRMGAKKRPYYRVVVMNSTSPRDGRAIEELGYYHPVEKQNQIKIKEDRMKDWISKGAILSDTVKMLLNKNNLNAKSQEV</sequence>
<organism>
    <name type="scientific">Borreliella burgdorferi (strain ATCC 35210 / DSM 4680 / CIP 102532 / B31)</name>
    <name type="common">Borrelia burgdorferi</name>
    <dbReference type="NCBI Taxonomy" id="224326"/>
    <lineage>
        <taxon>Bacteria</taxon>
        <taxon>Pseudomonadati</taxon>
        <taxon>Spirochaetota</taxon>
        <taxon>Spirochaetia</taxon>
        <taxon>Spirochaetales</taxon>
        <taxon>Borreliaceae</taxon>
        <taxon>Borreliella</taxon>
    </lineage>
</organism>
<gene>
    <name evidence="1" type="primary">rpsP</name>
    <name type="ordered locus">BB_0695</name>
</gene>
<protein>
    <recommendedName>
        <fullName evidence="1">Small ribosomal subunit protein bS16</fullName>
    </recommendedName>
    <alternativeName>
        <fullName evidence="2">30S ribosomal protein S16</fullName>
    </alternativeName>
</protein>
<dbReference type="EMBL" id="AE000783">
    <property type="protein sequence ID" value="AAC67048.1"/>
    <property type="molecule type" value="Genomic_DNA"/>
</dbReference>
<dbReference type="PIR" id="F70186">
    <property type="entry name" value="F70186"/>
</dbReference>
<dbReference type="RefSeq" id="NP_212829.1">
    <property type="nucleotide sequence ID" value="NC_001318.1"/>
</dbReference>
<dbReference type="RefSeq" id="WP_002557282.1">
    <property type="nucleotide sequence ID" value="NC_001318.1"/>
</dbReference>
<dbReference type="PDB" id="8FMW">
    <property type="method" value="EM"/>
    <property type="resolution" value="2.86 A"/>
    <property type="chains" value="P=1-83"/>
</dbReference>
<dbReference type="PDBsum" id="8FMW"/>
<dbReference type="EMDB" id="EMD-29298"/>
<dbReference type="SMR" id="O51638"/>
<dbReference type="STRING" id="224326.BB_0695"/>
<dbReference type="PaxDb" id="224326-BB_0695"/>
<dbReference type="EnsemblBacteria" id="AAC67048">
    <property type="protein sequence ID" value="AAC67048"/>
    <property type="gene ID" value="BB_0695"/>
</dbReference>
<dbReference type="GeneID" id="56567505"/>
<dbReference type="KEGG" id="bbu:BB_0695"/>
<dbReference type="PATRIC" id="fig|224326.49.peg.1086"/>
<dbReference type="HOGENOM" id="CLU_100590_5_0_12"/>
<dbReference type="OrthoDB" id="9807878at2"/>
<dbReference type="Proteomes" id="UP000001807">
    <property type="component" value="Chromosome"/>
</dbReference>
<dbReference type="GO" id="GO:0005737">
    <property type="term" value="C:cytoplasm"/>
    <property type="evidence" value="ECO:0007669"/>
    <property type="project" value="UniProtKB-ARBA"/>
</dbReference>
<dbReference type="GO" id="GO:0015935">
    <property type="term" value="C:small ribosomal subunit"/>
    <property type="evidence" value="ECO:0007669"/>
    <property type="project" value="TreeGrafter"/>
</dbReference>
<dbReference type="GO" id="GO:0003735">
    <property type="term" value="F:structural constituent of ribosome"/>
    <property type="evidence" value="ECO:0007669"/>
    <property type="project" value="InterPro"/>
</dbReference>
<dbReference type="GO" id="GO:0006412">
    <property type="term" value="P:translation"/>
    <property type="evidence" value="ECO:0007669"/>
    <property type="project" value="UniProtKB-UniRule"/>
</dbReference>
<dbReference type="Gene3D" id="3.30.1320.10">
    <property type="match status" value="1"/>
</dbReference>
<dbReference type="HAMAP" id="MF_00385">
    <property type="entry name" value="Ribosomal_bS16"/>
    <property type="match status" value="1"/>
</dbReference>
<dbReference type="InterPro" id="IPR000307">
    <property type="entry name" value="Ribosomal_bS16"/>
</dbReference>
<dbReference type="InterPro" id="IPR020592">
    <property type="entry name" value="Ribosomal_bS16_CS"/>
</dbReference>
<dbReference type="InterPro" id="IPR023803">
    <property type="entry name" value="Ribosomal_bS16_dom_sf"/>
</dbReference>
<dbReference type="NCBIfam" id="TIGR00002">
    <property type="entry name" value="S16"/>
    <property type="match status" value="1"/>
</dbReference>
<dbReference type="PANTHER" id="PTHR12919">
    <property type="entry name" value="30S RIBOSOMAL PROTEIN S16"/>
    <property type="match status" value="1"/>
</dbReference>
<dbReference type="PANTHER" id="PTHR12919:SF20">
    <property type="entry name" value="SMALL RIBOSOMAL SUBUNIT PROTEIN BS16M"/>
    <property type="match status" value="1"/>
</dbReference>
<dbReference type="Pfam" id="PF00886">
    <property type="entry name" value="Ribosomal_S16"/>
    <property type="match status" value="1"/>
</dbReference>
<dbReference type="SUPFAM" id="SSF54565">
    <property type="entry name" value="Ribosomal protein S16"/>
    <property type="match status" value="1"/>
</dbReference>
<dbReference type="PROSITE" id="PS00732">
    <property type="entry name" value="RIBOSOMAL_S16"/>
    <property type="match status" value="1"/>
</dbReference>
<reference key="1">
    <citation type="journal article" date="1997" name="Nature">
        <title>Genomic sequence of a Lyme disease spirochaete, Borrelia burgdorferi.</title>
        <authorList>
            <person name="Fraser C.M."/>
            <person name="Casjens S."/>
            <person name="Huang W.M."/>
            <person name="Sutton G.G."/>
            <person name="Clayton R.A."/>
            <person name="Lathigra R."/>
            <person name="White O."/>
            <person name="Ketchum K.A."/>
            <person name="Dodson R.J."/>
            <person name="Hickey E.K."/>
            <person name="Gwinn M.L."/>
            <person name="Dougherty B.A."/>
            <person name="Tomb J.-F."/>
            <person name="Fleischmann R.D."/>
            <person name="Richardson D.L."/>
            <person name="Peterson J.D."/>
            <person name="Kerlavage A.R."/>
            <person name="Quackenbush J."/>
            <person name="Salzberg S.L."/>
            <person name="Hanson M."/>
            <person name="van Vugt R."/>
            <person name="Palmer N."/>
            <person name="Adams M.D."/>
            <person name="Gocayne J.D."/>
            <person name="Weidman J.F."/>
            <person name="Utterback T.R."/>
            <person name="Watthey L."/>
            <person name="McDonald L.A."/>
            <person name="Artiach P."/>
            <person name="Bowman C."/>
            <person name="Garland S.A."/>
            <person name="Fujii C."/>
            <person name="Cotton M.D."/>
            <person name="Horst K."/>
            <person name="Roberts K.M."/>
            <person name="Hatch B."/>
            <person name="Smith H.O."/>
            <person name="Venter J.C."/>
        </authorList>
    </citation>
    <scope>NUCLEOTIDE SEQUENCE [LARGE SCALE GENOMIC DNA]</scope>
    <source>
        <strain>ATCC 35210 / DSM 4680 / CIP 102532 / B31</strain>
    </source>
</reference>
<feature type="chain" id="PRO_0000167157" description="Small ribosomal subunit protein bS16">
    <location>
        <begin position="1"/>
        <end position="86"/>
    </location>
</feature>